<reference evidence="4 6" key="1">
    <citation type="journal article" date="2004" name="Gene Expr. Patterns">
        <title>Cloning and expression pattern of vat-1 homolog gene in zebrafish.</title>
        <authorList>
            <person name="Loeb-Hennard C."/>
            <person name="Cousin X."/>
            <person name="Prengel I."/>
            <person name="Kremmer E."/>
        </authorList>
    </citation>
    <scope>NUCLEOTIDE SEQUENCE [MRNA]</scope>
    <scope>DEVELOPMENTAL STAGE</scope>
</reference>
<reference key="2">
    <citation type="journal article" date="2013" name="Nature">
        <title>The zebrafish reference genome sequence and its relationship to the human genome.</title>
        <authorList>
            <person name="Howe K."/>
            <person name="Clark M.D."/>
            <person name="Torroja C.F."/>
            <person name="Torrance J."/>
            <person name="Berthelot C."/>
            <person name="Muffato M."/>
            <person name="Collins J.E."/>
            <person name="Humphray S."/>
            <person name="McLaren K."/>
            <person name="Matthews L."/>
            <person name="McLaren S."/>
            <person name="Sealy I."/>
            <person name="Caccamo M."/>
            <person name="Churcher C."/>
            <person name="Scott C."/>
            <person name="Barrett J.C."/>
            <person name="Koch R."/>
            <person name="Rauch G.J."/>
            <person name="White S."/>
            <person name="Chow W."/>
            <person name="Kilian B."/>
            <person name="Quintais L.T."/>
            <person name="Guerra-Assuncao J.A."/>
            <person name="Zhou Y."/>
            <person name="Gu Y."/>
            <person name="Yen J."/>
            <person name="Vogel J.H."/>
            <person name="Eyre T."/>
            <person name="Redmond S."/>
            <person name="Banerjee R."/>
            <person name="Chi J."/>
            <person name="Fu B."/>
            <person name="Langley E."/>
            <person name="Maguire S.F."/>
            <person name="Laird G.K."/>
            <person name="Lloyd D."/>
            <person name="Kenyon E."/>
            <person name="Donaldson S."/>
            <person name="Sehra H."/>
            <person name="Almeida-King J."/>
            <person name="Loveland J."/>
            <person name="Trevanion S."/>
            <person name="Jones M."/>
            <person name="Quail M."/>
            <person name="Willey D."/>
            <person name="Hunt A."/>
            <person name="Burton J."/>
            <person name="Sims S."/>
            <person name="McLay K."/>
            <person name="Plumb B."/>
            <person name="Davis J."/>
            <person name="Clee C."/>
            <person name="Oliver K."/>
            <person name="Clark R."/>
            <person name="Riddle C."/>
            <person name="Elliot D."/>
            <person name="Threadgold G."/>
            <person name="Harden G."/>
            <person name="Ware D."/>
            <person name="Begum S."/>
            <person name="Mortimore B."/>
            <person name="Kerry G."/>
            <person name="Heath P."/>
            <person name="Phillimore B."/>
            <person name="Tracey A."/>
            <person name="Corby N."/>
            <person name="Dunn M."/>
            <person name="Johnson C."/>
            <person name="Wood J."/>
            <person name="Clark S."/>
            <person name="Pelan S."/>
            <person name="Griffiths G."/>
            <person name="Smith M."/>
            <person name="Glithero R."/>
            <person name="Howden P."/>
            <person name="Barker N."/>
            <person name="Lloyd C."/>
            <person name="Stevens C."/>
            <person name="Harley J."/>
            <person name="Holt K."/>
            <person name="Panagiotidis G."/>
            <person name="Lovell J."/>
            <person name="Beasley H."/>
            <person name="Henderson C."/>
            <person name="Gordon D."/>
            <person name="Auger K."/>
            <person name="Wright D."/>
            <person name="Collins J."/>
            <person name="Raisen C."/>
            <person name="Dyer L."/>
            <person name="Leung K."/>
            <person name="Robertson L."/>
            <person name="Ambridge K."/>
            <person name="Leongamornlert D."/>
            <person name="McGuire S."/>
            <person name="Gilderthorp R."/>
            <person name="Griffiths C."/>
            <person name="Manthravadi D."/>
            <person name="Nichol S."/>
            <person name="Barker G."/>
            <person name="Whitehead S."/>
            <person name="Kay M."/>
            <person name="Brown J."/>
            <person name="Murnane C."/>
            <person name="Gray E."/>
            <person name="Humphries M."/>
            <person name="Sycamore N."/>
            <person name="Barker D."/>
            <person name="Saunders D."/>
            <person name="Wallis J."/>
            <person name="Babbage A."/>
            <person name="Hammond S."/>
            <person name="Mashreghi-Mohammadi M."/>
            <person name="Barr L."/>
            <person name="Martin S."/>
            <person name="Wray P."/>
            <person name="Ellington A."/>
            <person name="Matthews N."/>
            <person name="Ellwood M."/>
            <person name="Woodmansey R."/>
            <person name="Clark G."/>
            <person name="Cooper J."/>
            <person name="Tromans A."/>
            <person name="Grafham D."/>
            <person name="Skuce C."/>
            <person name="Pandian R."/>
            <person name="Andrews R."/>
            <person name="Harrison E."/>
            <person name="Kimberley A."/>
            <person name="Garnett J."/>
            <person name="Fosker N."/>
            <person name="Hall R."/>
            <person name="Garner P."/>
            <person name="Kelly D."/>
            <person name="Bird C."/>
            <person name="Palmer S."/>
            <person name="Gehring I."/>
            <person name="Berger A."/>
            <person name="Dooley C.M."/>
            <person name="Ersan-Urun Z."/>
            <person name="Eser C."/>
            <person name="Geiger H."/>
            <person name="Geisler M."/>
            <person name="Karotki L."/>
            <person name="Kirn A."/>
            <person name="Konantz J."/>
            <person name="Konantz M."/>
            <person name="Oberlander M."/>
            <person name="Rudolph-Geiger S."/>
            <person name="Teucke M."/>
            <person name="Lanz C."/>
            <person name="Raddatz G."/>
            <person name="Osoegawa K."/>
            <person name="Zhu B."/>
            <person name="Rapp A."/>
            <person name="Widaa S."/>
            <person name="Langford C."/>
            <person name="Yang F."/>
            <person name="Schuster S.C."/>
            <person name="Carter N.P."/>
            <person name="Harrow J."/>
            <person name="Ning Z."/>
            <person name="Herrero J."/>
            <person name="Searle S.M."/>
            <person name="Enright A."/>
            <person name="Geisler R."/>
            <person name="Plasterk R.H."/>
            <person name="Lee C."/>
            <person name="Westerfield M."/>
            <person name="de Jong P.J."/>
            <person name="Zon L.I."/>
            <person name="Postlethwait J.H."/>
            <person name="Nusslein-Volhard C."/>
            <person name="Hubbard T.J."/>
            <person name="Roest Crollius H."/>
            <person name="Rogers J."/>
            <person name="Stemple D.L."/>
        </authorList>
    </citation>
    <scope>NUCLEOTIDE SEQUENCE [LARGE SCALE GENOMIC DNA]</scope>
    <source>
        <strain>Tuebingen</strain>
    </source>
</reference>
<reference evidence="4 7" key="3">
    <citation type="submission" date="2004-02" db="EMBL/GenBank/DDBJ databases">
        <authorList>
            <consortium name="NIH - Zebrafish Gene Collection (ZGC) project"/>
        </authorList>
    </citation>
    <scope>NUCLEOTIDE SEQUENCE [LARGE SCALE MRNA] OF 1-474</scope>
    <source>
        <tissue evidence="5">Embryo</tissue>
    </source>
</reference>
<organism>
    <name type="scientific">Danio rerio</name>
    <name type="common">Zebrafish</name>
    <name type="synonym">Brachydanio rerio</name>
    <dbReference type="NCBI Taxonomy" id="7955"/>
    <lineage>
        <taxon>Eukaryota</taxon>
        <taxon>Metazoa</taxon>
        <taxon>Chordata</taxon>
        <taxon>Craniata</taxon>
        <taxon>Vertebrata</taxon>
        <taxon>Euteleostomi</taxon>
        <taxon>Actinopterygii</taxon>
        <taxon>Neopterygii</taxon>
        <taxon>Teleostei</taxon>
        <taxon>Ostariophysi</taxon>
        <taxon>Cypriniformes</taxon>
        <taxon>Danionidae</taxon>
        <taxon>Danioninae</taxon>
        <taxon>Danio</taxon>
    </lineage>
</organism>
<protein>
    <recommendedName>
        <fullName>Synaptic vesicle membrane protein VAT-1 homolog</fullName>
        <ecNumber>1.-.-.-</ecNumber>
    </recommendedName>
</protein>
<gene>
    <name evidence="5" type="primary">vat1</name>
    <name type="ORF">si:dz163l24.2</name>
</gene>
<keyword id="KW-0560">Oxidoreductase</keyword>
<keyword id="KW-1185">Reference proteome</keyword>
<comment type="developmental stage">
    <text evidence="3">First detected at the 8-somite stage in the trigeminal nuclei. At the 10-somite stage, also expressed in the forming hindbrain and in the neural tube. By the 20-somite stage, expression has extended to the dorsorostral, ventrorostral and ventrocaudal neuron clusters, the epiphysis and the hindbrain. At 24 hours post-fertilization (hpf), detected in the developing gut. At later stages, expression is lost from the neural tube but continues in the brain and also appears in the retina and pharyngeal cavity.</text>
</comment>
<comment type="similarity">
    <text evidence="1">Belongs to the zinc-containing alcohol dehydrogenase family. Quinone oxidoreductase subfamily.</text>
</comment>
<name>VAT1_DANRE</name>
<feature type="chain" id="PRO_0000160920" description="Synaptic vesicle membrane protein VAT-1 homolog">
    <location>
        <begin position="1"/>
        <end position="484"/>
    </location>
</feature>
<feature type="region of interest" description="Disordered" evidence="2">
    <location>
        <begin position="1"/>
        <end position="65"/>
    </location>
</feature>
<feature type="region of interest" description="Disordered" evidence="2">
    <location>
        <begin position="402"/>
        <end position="484"/>
    </location>
</feature>
<feature type="compositionally biased region" description="Low complexity" evidence="2">
    <location>
        <begin position="1"/>
        <end position="13"/>
    </location>
</feature>
<feature type="compositionally biased region" description="Low complexity" evidence="2">
    <location>
        <begin position="40"/>
        <end position="61"/>
    </location>
</feature>
<feature type="compositionally biased region" description="Basic and acidic residues" evidence="2">
    <location>
        <begin position="411"/>
        <end position="484"/>
    </location>
</feature>
<feature type="sequence conflict" description="In Ref. 1; AAS37669." evidence="4" ref="1">
    <original>S</original>
    <variation>C</variation>
    <location>
        <position position="355"/>
    </location>
</feature>
<proteinExistence type="evidence at transcript level"/>
<accession>Q8JFV8</accession>
<accession>Q5SF06</accession>
<accession>Q6NYU0</accession>
<evidence type="ECO:0000255" key="1"/>
<evidence type="ECO:0000256" key="2">
    <source>
        <dbReference type="SAM" id="MobiDB-lite"/>
    </source>
</evidence>
<evidence type="ECO:0000269" key="3">
    <source>
    </source>
</evidence>
<evidence type="ECO:0000305" key="4"/>
<evidence type="ECO:0000312" key="5">
    <source>
        <dbReference type="EMBL" id="AAH66463.1"/>
    </source>
</evidence>
<evidence type="ECO:0000312" key="6">
    <source>
        <dbReference type="EMBL" id="AAS37669.1"/>
    </source>
</evidence>
<evidence type="ECO:0000312" key="7">
    <source>
        <dbReference type="EMBL" id="CAD43425.1"/>
    </source>
</evidence>
<sequence length="484" mass="53563">MSGEDAPAQQQNAEEQKQQETKTPAESPKTESKPDPPPTSASTEAAATAAAAADTPAPAAEKAPEEDTFTYRALVLTGYGGYDKVKLQVKKGKPALKSGEVMVRVKMCGLNFADLMARQGLYDRLPSPPVTPGMECSGVIEAVGEEVTDRKVGDKVLVLNRSGMWQEVVVVASTHTFLMPEGMSFEEAAALPVNYITAYMMLFDFGHLRPNQSVLVHMAAGGVGIAATQLCKTVNDVTVFGTASASKHEVISQGGVTHPIDYRTRDYVEEVRKISPKGLDIVLDPLGGSDTHKGYNLLKPMGKLISYGAANMLAGQKKNLFAVAKTWYQQFSVHTLSLIQGNRSVCGFHLGYLDSETELIDQAMTAVMDLYRQGKVKPRIDSTYHLEQVGDAMRRMQERNNIGKIILTTEPMKEEEKKEEAKKDEEKKDDKKKDDKKKDDKKKEDKKKDEAKKEEKKDEKKKEEAKKDDKKAEEKKEEVKKEEN</sequence>
<dbReference type="EC" id="1.-.-.-"/>
<dbReference type="EMBL" id="AY534888">
    <property type="protein sequence ID" value="AAS37669.1"/>
    <property type="molecule type" value="mRNA"/>
</dbReference>
<dbReference type="EMBL" id="AL591669">
    <property type="protein sequence ID" value="CAD43425.1"/>
    <property type="molecule type" value="Genomic_DNA"/>
</dbReference>
<dbReference type="EMBL" id="BC066463">
    <property type="protein sequence ID" value="AAH66463.1"/>
    <property type="molecule type" value="mRNA"/>
</dbReference>
<dbReference type="SMR" id="Q8JFV8"/>
<dbReference type="FunCoup" id="Q8JFV8">
    <property type="interactions" value="810"/>
</dbReference>
<dbReference type="IntAct" id="Q8JFV8">
    <property type="interactions" value="1"/>
</dbReference>
<dbReference type="MINT" id="Q8JFV8"/>
<dbReference type="STRING" id="7955.ENSDARP00000073439"/>
<dbReference type="PaxDb" id="7955-ENSDARP00000073439"/>
<dbReference type="Ensembl" id="ENSDART00000078982">
    <property type="protein sequence ID" value="ENSDARP00000073439"/>
    <property type="gene ID" value="ENSDARG00000056481"/>
</dbReference>
<dbReference type="Ensembl" id="ENSDART00000193837">
    <property type="protein sequence ID" value="ENSDARP00000147945"/>
    <property type="gene ID" value="ENSDARG00000111382"/>
</dbReference>
<dbReference type="AGR" id="ZFIN:ZDB-GENE-030616-178"/>
<dbReference type="ZFIN" id="ZDB-GENE-030616-178">
    <property type="gene designation" value="vat1"/>
</dbReference>
<dbReference type="eggNOG" id="KOG1197">
    <property type="taxonomic scope" value="Eukaryota"/>
</dbReference>
<dbReference type="HOGENOM" id="CLU_026673_3_1_1"/>
<dbReference type="InParanoid" id="Q8JFV8"/>
<dbReference type="OMA" id="VWMPYLT"/>
<dbReference type="PhylomeDB" id="Q8JFV8"/>
<dbReference type="TreeFam" id="TF314255"/>
<dbReference type="Reactome" id="R-DRE-6798695">
    <property type="pathway name" value="Neutrophil degranulation"/>
</dbReference>
<dbReference type="PRO" id="PR:Q8JFV8"/>
<dbReference type="Proteomes" id="UP000000437">
    <property type="component" value="Unplaced"/>
</dbReference>
<dbReference type="Bgee" id="ENSDARG00000056481">
    <property type="expression patterns" value="Expressed in brain and 28 other cell types or tissues"/>
</dbReference>
<dbReference type="GO" id="GO:0005741">
    <property type="term" value="C:mitochondrial outer membrane"/>
    <property type="evidence" value="ECO:0000318"/>
    <property type="project" value="GO_Central"/>
</dbReference>
<dbReference type="GO" id="GO:0016491">
    <property type="term" value="F:oxidoreductase activity"/>
    <property type="evidence" value="ECO:0007669"/>
    <property type="project" value="UniProtKB-KW"/>
</dbReference>
<dbReference type="GO" id="GO:0008270">
    <property type="term" value="F:zinc ion binding"/>
    <property type="evidence" value="ECO:0007669"/>
    <property type="project" value="InterPro"/>
</dbReference>
<dbReference type="GO" id="GO:0010637">
    <property type="term" value="P:negative regulation of mitochondrial fusion"/>
    <property type="evidence" value="ECO:0000318"/>
    <property type="project" value="GO_Central"/>
</dbReference>
<dbReference type="CDD" id="cd08275">
    <property type="entry name" value="MDR3"/>
    <property type="match status" value="1"/>
</dbReference>
<dbReference type="Gene3D" id="3.90.180.10">
    <property type="entry name" value="Medium-chain alcohol dehydrogenases, catalytic domain"/>
    <property type="match status" value="1"/>
</dbReference>
<dbReference type="Gene3D" id="3.40.50.720">
    <property type="entry name" value="NAD(P)-binding Rossmann-like Domain"/>
    <property type="match status" value="1"/>
</dbReference>
<dbReference type="InterPro" id="IPR013154">
    <property type="entry name" value="ADH-like_N"/>
</dbReference>
<dbReference type="InterPro" id="IPR011032">
    <property type="entry name" value="GroES-like_sf"/>
</dbReference>
<dbReference type="InterPro" id="IPR036291">
    <property type="entry name" value="NAD(P)-bd_dom_sf"/>
</dbReference>
<dbReference type="InterPro" id="IPR020843">
    <property type="entry name" value="PKS_ER"/>
</dbReference>
<dbReference type="InterPro" id="IPR002364">
    <property type="entry name" value="Quin_OxRdtase/zeta-crystal_CS"/>
</dbReference>
<dbReference type="InterPro" id="IPR052100">
    <property type="entry name" value="SV-ATPase_mito-regulator"/>
</dbReference>
<dbReference type="PANTHER" id="PTHR44054:SF1">
    <property type="entry name" value="SYNAPTIC VESICLE MEMBRANE PROTEIN VAT-1 HOMOLOG"/>
    <property type="match status" value="1"/>
</dbReference>
<dbReference type="PANTHER" id="PTHR44054">
    <property type="entry name" value="SYNAPTIC VESICLE MEMBRANE PROTEIN VAT-1 HOMOLOG-LIKE"/>
    <property type="match status" value="1"/>
</dbReference>
<dbReference type="Pfam" id="PF08240">
    <property type="entry name" value="ADH_N"/>
    <property type="match status" value="1"/>
</dbReference>
<dbReference type="Pfam" id="PF13602">
    <property type="entry name" value="ADH_zinc_N_2"/>
    <property type="match status" value="1"/>
</dbReference>
<dbReference type="SMART" id="SM00829">
    <property type="entry name" value="PKS_ER"/>
    <property type="match status" value="1"/>
</dbReference>
<dbReference type="SUPFAM" id="SSF50129">
    <property type="entry name" value="GroES-like"/>
    <property type="match status" value="1"/>
</dbReference>
<dbReference type="SUPFAM" id="SSF51735">
    <property type="entry name" value="NAD(P)-binding Rossmann-fold domains"/>
    <property type="match status" value="1"/>
</dbReference>
<dbReference type="PROSITE" id="PS01162">
    <property type="entry name" value="QOR_ZETA_CRYSTAL"/>
    <property type="match status" value="1"/>
</dbReference>